<proteinExistence type="inferred from homology"/>
<reference key="1">
    <citation type="journal article" date="2004" name="Nature">
        <title>Genome evolution in yeasts.</title>
        <authorList>
            <person name="Dujon B."/>
            <person name="Sherman D."/>
            <person name="Fischer G."/>
            <person name="Durrens P."/>
            <person name="Casaregola S."/>
            <person name="Lafontaine I."/>
            <person name="de Montigny J."/>
            <person name="Marck C."/>
            <person name="Neuveglise C."/>
            <person name="Talla E."/>
            <person name="Goffard N."/>
            <person name="Frangeul L."/>
            <person name="Aigle M."/>
            <person name="Anthouard V."/>
            <person name="Babour A."/>
            <person name="Barbe V."/>
            <person name="Barnay S."/>
            <person name="Blanchin S."/>
            <person name="Beckerich J.-M."/>
            <person name="Beyne E."/>
            <person name="Bleykasten C."/>
            <person name="Boisrame A."/>
            <person name="Boyer J."/>
            <person name="Cattolico L."/>
            <person name="Confanioleri F."/>
            <person name="de Daruvar A."/>
            <person name="Despons L."/>
            <person name="Fabre E."/>
            <person name="Fairhead C."/>
            <person name="Ferry-Dumazet H."/>
            <person name="Groppi A."/>
            <person name="Hantraye F."/>
            <person name="Hennequin C."/>
            <person name="Jauniaux N."/>
            <person name="Joyet P."/>
            <person name="Kachouri R."/>
            <person name="Kerrest A."/>
            <person name="Koszul R."/>
            <person name="Lemaire M."/>
            <person name="Lesur I."/>
            <person name="Ma L."/>
            <person name="Muller H."/>
            <person name="Nicaud J.-M."/>
            <person name="Nikolski M."/>
            <person name="Oztas S."/>
            <person name="Ozier-Kalogeropoulos O."/>
            <person name="Pellenz S."/>
            <person name="Potier S."/>
            <person name="Richard G.-F."/>
            <person name="Straub M.-L."/>
            <person name="Suleau A."/>
            <person name="Swennen D."/>
            <person name="Tekaia F."/>
            <person name="Wesolowski-Louvel M."/>
            <person name="Westhof E."/>
            <person name="Wirth B."/>
            <person name="Zeniou-Meyer M."/>
            <person name="Zivanovic Y."/>
            <person name="Bolotin-Fukuhara M."/>
            <person name="Thierry A."/>
            <person name="Bouchier C."/>
            <person name="Caudron B."/>
            <person name="Scarpelli C."/>
            <person name="Gaillardin C."/>
            <person name="Weissenbach J."/>
            <person name="Wincker P."/>
            <person name="Souciet J.-L."/>
        </authorList>
    </citation>
    <scope>NUCLEOTIDE SEQUENCE [LARGE SCALE GENOMIC DNA]</scope>
    <source>
        <strain>ATCC 8585 / CBS 2359 / DSM 70799 / NBRC 1267 / NRRL Y-1140 / WM37</strain>
    </source>
</reference>
<comment type="function">
    <text evidence="2">Component of the general transcription and DNA repair factor IIH (TFIIH) core complex, which is involved in general and transcription-coupled nucleotide excision repair (NER) of damaged DNA and, when complexed to TFIIK, in RNA transcription by RNA polymerase II. In NER, TFIIH acts by opening DNA around the lesion to allow the excision of the damaged oligonucleotide and its replacement by a new DNA fragment. In transcription, TFIIH has an essential role in transcription initiation. When the pre-initiation complex (PIC) has been established, TFIIH is required for promoter opening and promoter escape. Phosphorylation of the C-terminal tail (CTD) of the largest subunit of RNA polymerase II by the kinase module TFIIK controls the initiation of transcription.</text>
</comment>
<comment type="subunit">
    <text evidence="2">Component of the 7-subunit TFIIH core complex composed of XPB/SSL2, XPD/RAD3, SSL1, TFB1, TFB2, TFB4 and TFB5, which is active in NER. The core complex associates with the 3-subunit CTD-kinase module TFIIK composed of CCL1, KIN28 and TFB3 to form the 10-subunit holoenzyme (holo-TFIIH) active in transcription.</text>
</comment>
<comment type="subcellular location">
    <subcellularLocation>
        <location evidence="1">Nucleus</location>
    </subcellularLocation>
</comment>
<comment type="similarity">
    <text evidence="3">Belongs to the TFB5 family.</text>
</comment>
<dbReference type="EMBL" id="CR382123">
    <property type="protein sequence ID" value="CAH01575.2"/>
    <property type="molecule type" value="Genomic_DNA"/>
</dbReference>
<dbReference type="RefSeq" id="XP_452724.2">
    <property type="nucleotide sequence ID" value="XM_452724.2"/>
</dbReference>
<dbReference type="SMR" id="Q6CTL5"/>
<dbReference type="FunCoup" id="Q6CTL5">
    <property type="interactions" value="167"/>
</dbReference>
<dbReference type="STRING" id="284590.Q6CTL5"/>
<dbReference type="PaxDb" id="284590-Q6CTL5"/>
<dbReference type="KEGG" id="kla:KLLA0_C11737g"/>
<dbReference type="eggNOG" id="KOG3451">
    <property type="taxonomic scope" value="Eukaryota"/>
</dbReference>
<dbReference type="HOGENOM" id="CLU_166246_3_1_1"/>
<dbReference type="InParanoid" id="Q6CTL5"/>
<dbReference type="Proteomes" id="UP000000598">
    <property type="component" value="Chromosome C"/>
</dbReference>
<dbReference type="GO" id="GO:0000439">
    <property type="term" value="C:transcription factor TFIIH core complex"/>
    <property type="evidence" value="ECO:0007669"/>
    <property type="project" value="InterPro"/>
</dbReference>
<dbReference type="GO" id="GO:0005675">
    <property type="term" value="C:transcription factor TFIIH holo complex"/>
    <property type="evidence" value="ECO:0007669"/>
    <property type="project" value="TreeGrafter"/>
</dbReference>
<dbReference type="GO" id="GO:0006294">
    <property type="term" value="P:nucleotide-excision repair, preincision complex assembly"/>
    <property type="evidence" value="ECO:0007669"/>
    <property type="project" value="TreeGrafter"/>
</dbReference>
<dbReference type="GO" id="GO:0006367">
    <property type="term" value="P:transcription initiation at RNA polymerase II promoter"/>
    <property type="evidence" value="ECO:0007669"/>
    <property type="project" value="InterPro"/>
</dbReference>
<dbReference type="FunFam" id="3.30.70.1220:FF:000002">
    <property type="entry name" value="RNA polymerase II transcription factor B subunit 5"/>
    <property type="match status" value="1"/>
</dbReference>
<dbReference type="Gene3D" id="3.30.70.1220">
    <property type="entry name" value="TFB5-like"/>
    <property type="match status" value="1"/>
</dbReference>
<dbReference type="InterPro" id="IPR035935">
    <property type="entry name" value="TFB5-like_sf"/>
</dbReference>
<dbReference type="InterPro" id="IPR009400">
    <property type="entry name" value="TFIIH_TTDA/Tfb5"/>
</dbReference>
<dbReference type="PANTHER" id="PTHR28580">
    <property type="entry name" value="GENERAL TRANSCRIPTION FACTOR IIH SUBUNIT 5"/>
    <property type="match status" value="1"/>
</dbReference>
<dbReference type="PANTHER" id="PTHR28580:SF1">
    <property type="entry name" value="GENERAL TRANSCRIPTION FACTOR IIH SUBUNIT 5"/>
    <property type="match status" value="1"/>
</dbReference>
<dbReference type="Pfam" id="PF06331">
    <property type="entry name" value="Tfb5"/>
    <property type="match status" value="1"/>
</dbReference>
<dbReference type="SMART" id="SM01395">
    <property type="entry name" value="Tbf5"/>
    <property type="match status" value="1"/>
</dbReference>
<dbReference type="SUPFAM" id="SSF142897">
    <property type="entry name" value="TFB5-like"/>
    <property type="match status" value="1"/>
</dbReference>
<organism>
    <name type="scientific">Kluyveromyces lactis (strain ATCC 8585 / CBS 2359 / DSM 70799 / NBRC 1267 / NRRL Y-1140 / WM37)</name>
    <name type="common">Yeast</name>
    <name type="synonym">Candida sphaerica</name>
    <dbReference type="NCBI Taxonomy" id="284590"/>
    <lineage>
        <taxon>Eukaryota</taxon>
        <taxon>Fungi</taxon>
        <taxon>Dikarya</taxon>
        <taxon>Ascomycota</taxon>
        <taxon>Saccharomycotina</taxon>
        <taxon>Saccharomycetes</taxon>
        <taxon>Saccharomycetales</taxon>
        <taxon>Saccharomycetaceae</taxon>
        <taxon>Kluyveromyces</taxon>
    </lineage>
</organism>
<protein>
    <recommendedName>
        <fullName>General transcription and DNA repair factor IIH subunit TFB5</fullName>
        <shortName>TFIIH subunit TFB5</shortName>
    </recommendedName>
    <alternativeName>
        <fullName>RNA polymerase II transcription factor B subunit 5</fullName>
    </alternativeName>
</protein>
<name>TFB5_KLULA</name>
<evidence type="ECO:0000250" key="1"/>
<evidence type="ECO:0000250" key="2">
    <source>
        <dbReference type="UniProtKB" id="Q3E7C1"/>
    </source>
</evidence>
<evidence type="ECO:0000305" key="3"/>
<sequence length="72" mass="8437">MTRARKGTLVQCDPSIRALILRMDADRNDIIYEELDDTHLLVDPSKVEFIKYELNRLLSENIYNPLDEEENA</sequence>
<accession>Q6CTL5</accession>
<keyword id="KW-0227">DNA damage</keyword>
<keyword id="KW-0234">DNA repair</keyword>
<keyword id="KW-0539">Nucleus</keyword>
<keyword id="KW-1185">Reference proteome</keyword>
<keyword id="KW-0804">Transcription</keyword>
<keyword id="KW-0805">Transcription regulation</keyword>
<feature type="chain" id="PRO_0000119282" description="General transcription and DNA repair factor IIH subunit TFB5">
    <location>
        <begin position="1"/>
        <end position="72"/>
    </location>
</feature>
<gene>
    <name type="primary">TFB5</name>
    <name type="ordered locus">KLLA0C11737g</name>
</gene>